<feature type="signal peptide" evidence="1">
    <location>
        <begin position="1"/>
        <end position="20"/>
    </location>
</feature>
<feature type="chain" id="PRO_0000377996" description="Uncharacterized protein 117L">
    <location>
        <begin position="21"/>
        <end position="249"/>
    </location>
</feature>
<protein>
    <recommendedName>
        <fullName>Uncharacterized protein 117L</fullName>
    </recommendedName>
</protein>
<reference key="1">
    <citation type="journal article" date="2001" name="Virology">
        <title>Analysis of the first complete DNA sequence of an invertebrate iridovirus: coding strategy of the genome of Chilo iridescent virus.</title>
        <authorList>
            <person name="Jakob N.J."/>
            <person name="Mueller K."/>
            <person name="Bahr U."/>
            <person name="Darai G."/>
        </authorList>
    </citation>
    <scope>NUCLEOTIDE SEQUENCE [LARGE SCALE GENOMIC DNA]</scope>
</reference>
<reference key="2">
    <citation type="journal article" date="2007" name="Virol. J.">
        <title>Comparative genomic analysis of the family Iridoviridae: re-annotating and defining the core set of iridovirus genes.</title>
        <authorList>
            <person name="Eaton H.E."/>
            <person name="Metcalf J."/>
            <person name="Penny E."/>
            <person name="Tcherepanov V."/>
            <person name="Upton C."/>
            <person name="Brunetti C.R."/>
        </authorList>
    </citation>
    <scope>GENOME REANNOTATION</scope>
</reference>
<name>VF117_IIV6</name>
<organismHost>
    <name type="scientific">Acheta domesticus</name>
    <name type="common">House cricket</name>
    <dbReference type="NCBI Taxonomy" id="6997"/>
</organismHost>
<organismHost>
    <name type="scientific">Chilo suppressalis</name>
    <name type="common">Asiatic rice borer moth</name>
    <dbReference type="NCBI Taxonomy" id="168631"/>
</organismHost>
<organismHost>
    <name type="scientific">Gryllus bimaculatus</name>
    <name type="common">Two-spotted cricket</name>
    <dbReference type="NCBI Taxonomy" id="6999"/>
</organismHost>
<organismHost>
    <name type="scientific">Gryllus campestris</name>
    <dbReference type="NCBI Taxonomy" id="58607"/>
</organismHost>
<organismHost>
    <name type="scientific">Spodoptera frugiperda</name>
    <name type="common">Fall armyworm</name>
    <dbReference type="NCBI Taxonomy" id="7108"/>
</organismHost>
<organism>
    <name type="scientific">Invertebrate iridescent virus 6</name>
    <name type="common">IIV-6</name>
    <name type="synonym">Chilo iridescent virus</name>
    <dbReference type="NCBI Taxonomy" id="176652"/>
    <lineage>
        <taxon>Viruses</taxon>
        <taxon>Varidnaviria</taxon>
        <taxon>Bamfordvirae</taxon>
        <taxon>Nucleocytoviricota</taxon>
        <taxon>Megaviricetes</taxon>
        <taxon>Pimascovirales</taxon>
        <taxon>Iridoviridae</taxon>
        <taxon>Betairidovirinae</taxon>
        <taxon>Iridovirus</taxon>
    </lineage>
</organism>
<sequence length="249" mass="27463">MSNQNKVLSLGLLLLAAVAAWYLWNKKNKKSGSQYVPASSIVEPFMPSLTYKVDKVYDASAPFGGQGNGDFMSVPGTFQSMVPPRFGMLDGAVVSVPTKNGSINPGIAPLYNNLDQDAMAFNPSSPLQQGIMDDNGEMIQPVVYDRIMYANRRSRLLEGSDFIRGDLPIFPQNLGWFSPSVQPHIDLRKGIVDNYDKDTADQLKLLQMKSEGRFDRAFEGEMVPPNTLIPSYGTFINPSVGDVEIVNFE</sequence>
<proteinExistence type="inferred from homology"/>
<comment type="similarity">
    <text evidence="2">Belongs to the IIV-6 117L family.</text>
</comment>
<gene>
    <name type="ORF">IIV6-117L</name>
</gene>
<evidence type="ECO:0000255" key="1"/>
<evidence type="ECO:0000305" key="2"/>
<dbReference type="EMBL" id="AF303741">
    <property type="protein sequence ID" value="AAB94443.1"/>
    <property type="molecule type" value="Genomic_DNA"/>
</dbReference>
<dbReference type="PIR" id="T03069">
    <property type="entry name" value="T03069"/>
</dbReference>
<dbReference type="RefSeq" id="NP_149580.1">
    <property type="nucleotide sequence ID" value="NC_003038.1"/>
</dbReference>
<dbReference type="SMR" id="O55732"/>
<dbReference type="KEGG" id="vg:1733358"/>
<dbReference type="OrthoDB" id="6377at10239"/>
<dbReference type="Proteomes" id="UP000001359">
    <property type="component" value="Genome"/>
</dbReference>
<dbReference type="InterPro" id="IPR043882">
    <property type="entry name" value="DUF5850"/>
</dbReference>
<dbReference type="Pfam" id="PF19168">
    <property type="entry name" value="DUF5850"/>
    <property type="match status" value="1"/>
</dbReference>
<keyword id="KW-1185">Reference proteome</keyword>
<keyword id="KW-0732">Signal</keyword>
<accession>O55732</accession>